<feature type="chain" id="PRO_1000121024" description="Large ribosomal subunit protein uL10">
    <location>
        <begin position="1"/>
        <end position="175"/>
    </location>
</feature>
<organism>
    <name type="scientific">Picosynechococcus sp. (strain ATCC 27264 / PCC 7002 / PR-6)</name>
    <name type="common">Agmenellum quadruplicatum</name>
    <dbReference type="NCBI Taxonomy" id="32049"/>
    <lineage>
        <taxon>Bacteria</taxon>
        <taxon>Bacillati</taxon>
        <taxon>Cyanobacteriota</taxon>
        <taxon>Cyanophyceae</taxon>
        <taxon>Oscillatoriophycideae</taxon>
        <taxon>Chroococcales</taxon>
        <taxon>Geminocystaceae</taxon>
        <taxon>Picosynechococcus</taxon>
    </lineage>
</organism>
<gene>
    <name evidence="1" type="primary">rplJ</name>
    <name evidence="1" type="synonym">rpl10</name>
    <name type="ordered locus">SYNPCC7002_A1027</name>
</gene>
<proteinExistence type="inferred from homology"/>
<sequence length="175" mass="18745">MGKSLADKQELVAEIKDLLKDAQLTFVIDYKGLTVAEITDLRNRLRPAGAYCKIAKNTLMHIAVDGDETWQPVQSLLKDSSAFLIAGEDVASAVKAYKEFRKATKKTELRGGVMEGQALTSDQIEALGDLPTKDQLYGQIAGAINAVTAKIAIGINEVPGSLARAIKAVSEKEAA</sequence>
<protein>
    <recommendedName>
        <fullName evidence="1">Large ribosomal subunit protein uL10</fullName>
    </recommendedName>
    <alternativeName>
        <fullName evidence="2">50S ribosomal protein L10</fullName>
    </alternativeName>
</protein>
<comment type="function">
    <text evidence="1">Forms part of the ribosomal stalk, playing a central role in the interaction of the ribosome with GTP-bound translation factors.</text>
</comment>
<comment type="subunit">
    <text evidence="1">Part of the ribosomal stalk of the 50S ribosomal subunit. The N-terminus interacts with L11 and the large rRNA to form the base of the stalk. The C-terminus forms an elongated spine to which L12 dimers bind in a sequential fashion forming a multimeric L10(L12)X complex.</text>
</comment>
<comment type="similarity">
    <text evidence="1">Belongs to the universal ribosomal protein uL10 family.</text>
</comment>
<name>RL10_PICP2</name>
<keyword id="KW-1185">Reference proteome</keyword>
<keyword id="KW-0687">Ribonucleoprotein</keyword>
<keyword id="KW-0689">Ribosomal protein</keyword>
<keyword id="KW-0694">RNA-binding</keyword>
<keyword id="KW-0699">rRNA-binding</keyword>
<accession>B1XJH0</accession>
<evidence type="ECO:0000255" key="1">
    <source>
        <dbReference type="HAMAP-Rule" id="MF_00362"/>
    </source>
</evidence>
<evidence type="ECO:0000305" key="2"/>
<reference key="1">
    <citation type="submission" date="2008-02" db="EMBL/GenBank/DDBJ databases">
        <title>Complete sequence of Synechococcus sp. PCC 7002.</title>
        <authorList>
            <person name="Li T."/>
            <person name="Zhao J."/>
            <person name="Zhao C."/>
            <person name="Liu Z."/>
            <person name="Zhao F."/>
            <person name="Marquardt J."/>
            <person name="Nomura C.T."/>
            <person name="Persson S."/>
            <person name="Detter J.C."/>
            <person name="Richardson P.M."/>
            <person name="Lanz C."/>
            <person name="Schuster S.C."/>
            <person name="Wang J."/>
            <person name="Li S."/>
            <person name="Huang X."/>
            <person name="Cai T."/>
            <person name="Yu Z."/>
            <person name="Luo J."/>
            <person name="Zhao J."/>
            <person name="Bryant D.A."/>
        </authorList>
    </citation>
    <scope>NUCLEOTIDE SEQUENCE [LARGE SCALE GENOMIC DNA]</scope>
    <source>
        <strain>ATCC 27264 / PCC 7002 / PR-6</strain>
    </source>
</reference>
<dbReference type="EMBL" id="CP000951">
    <property type="protein sequence ID" value="ACA99030.1"/>
    <property type="molecule type" value="Genomic_DNA"/>
</dbReference>
<dbReference type="RefSeq" id="WP_012306654.1">
    <property type="nucleotide sequence ID" value="NZ_JAHHPU010000001.1"/>
</dbReference>
<dbReference type="SMR" id="B1XJH0"/>
<dbReference type="STRING" id="32049.SYNPCC7002_A1027"/>
<dbReference type="KEGG" id="syp:SYNPCC7002_A1027"/>
<dbReference type="eggNOG" id="COG0244">
    <property type="taxonomic scope" value="Bacteria"/>
</dbReference>
<dbReference type="HOGENOM" id="CLU_092227_1_1_3"/>
<dbReference type="Proteomes" id="UP000001688">
    <property type="component" value="Chromosome"/>
</dbReference>
<dbReference type="GO" id="GO:0015934">
    <property type="term" value="C:large ribosomal subunit"/>
    <property type="evidence" value="ECO:0007669"/>
    <property type="project" value="InterPro"/>
</dbReference>
<dbReference type="GO" id="GO:0070180">
    <property type="term" value="F:large ribosomal subunit rRNA binding"/>
    <property type="evidence" value="ECO:0007669"/>
    <property type="project" value="UniProtKB-UniRule"/>
</dbReference>
<dbReference type="GO" id="GO:0003735">
    <property type="term" value="F:structural constituent of ribosome"/>
    <property type="evidence" value="ECO:0007669"/>
    <property type="project" value="InterPro"/>
</dbReference>
<dbReference type="GO" id="GO:0006412">
    <property type="term" value="P:translation"/>
    <property type="evidence" value="ECO:0007669"/>
    <property type="project" value="UniProtKB-UniRule"/>
</dbReference>
<dbReference type="CDD" id="cd05797">
    <property type="entry name" value="Ribosomal_L10"/>
    <property type="match status" value="1"/>
</dbReference>
<dbReference type="Gene3D" id="3.30.70.1730">
    <property type="match status" value="1"/>
</dbReference>
<dbReference type="Gene3D" id="6.10.250.290">
    <property type="match status" value="1"/>
</dbReference>
<dbReference type="HAMAP" id="MF_00362">
    <property type="entry name" value="Ribosomal_uL10"/>
    <property type="match status" value="1"/>
</dbReference>
<dbReference type="InterPro" id="IPR001790">
    <property type="entry name" value="Ribosomal_uL10"/>
</dbReference>
<dbReference type="InterPro" id="IPR043141">
    <property type="entry name" value="Ribosomal_uL10-like_sf"/>
</dbReference>
<dbReference type="InterPro" id="IPR022973">
    <property type="entry name" value="Ribosomal_uL10_bac"/>
</dbReference>
<dbReference type="InterPro" id="IPR047865">
    <property type="entry name" value="Ribosomal_uL10_bac_type"/>
</dbReference>
<dbReference type="InterPro" id="IPR002363">
    <property type="entry name" value="Ribosomal_uL10_CS_bac"/>
</dbReference>
<dbReference type="NCBIfam" id="NF000955">
    <property type="entry name" value="PRK00099.1-1"/>
    <property type="match status" value="1"/>
</dbReference>
<dbReference type="PANTHER" id="PTHR11560">
    <property type="entry name" value="39S RIBOSOMAL PROTEIN L10, MITOCHONDRIAL"/>
    <property type="match status" value="1"/>
</dbReference>
<dbReference type="Pfam" id="PF00466">
    <property type="entry name" value="Ribosomal_L10"/>
    <property type="match status" value="1"/>
</dbReference>
<dbReference type="SUPFAM" id="SSF160369">
    <property type="entry name" value="Ribosomal protein L10-like"/>
    <property type="match status" value="1"/>
</dbReference>
<dbReference type="PROSITE" id="PS01109">
    <property type="entry name" value="RIBOSOMAL_L10"/>
    <property type="match status" value="1"/>
</dbReference>